<name>CLPX_METPB</name>
<proteinExistence type="inferred from homology"/>
<keyword id="KW-0067">ATP-binding</keyword>
<keyword id="KW-0143">Chaperone</keyword>
<keyword id="KW-0479">Metal-binding</keyword>
<keyword id="KW-0547">Nucleotide-binding</keyword>
<keyword id="KW-0862">Zinc</keyword>
<feature type="chain" id="PRO_1000097968" description="ATP-dependent Clp protease ATP-binding subunit ClpX">
    <location>
        <begin position="1"/>
        <end position="423"/>
    </location>
</feature>
<feature type="domain" description="ClpX-type ZB" evidence="2">
    <location>
        <begin position="3"/>
        <end position="56"/>
    </location>
</feature>
<feature type="binding site" evidence="2">
    <location>
        <position position="15"/>
    </location>
    <ligand>
        <name>Zn(2+)</name>
        <dbReference type="ChEBI" id="CHEBI:29105"/>
    </ligand>
</feature>
<feature type="binding site" evidence="2">
    <location>
        <position position="18"/>
    </location>
    <ligand>
        <name>Zn(2+)</name>
        <dbReference type="ChEBI" id="CHEBI:29105"/>
    </ligand>
</feature>
<feature type="binding site" evidence="2">
    <location>
        <position position="37"/>
    </location>
    <ligand>
        <name>Zn(2+)</name>
        <dbReference type="ChEBI" id="CHEBI:29105"/>
    </ligand>
</feature>
<feature type="binding site" evidence="2">
    <location>
        <position position="40"/>
    </location>
    <ligand>
        <name>Zn(2+)</name>
        <dbReference type="ChEBI" id="CHEBI:29105"/>
    </ligand>
</feature>
<feature type="binding site" evidence="1">
    <location>
        <begin position="119"/>
        <end position="126"/>
    </location>
    <ligand>
        <name>ATP</name>
        <dbReference type="ChEBI" id="CHEBI:30616"/>
    </ligand>
</feature>
<sequence>MSKTGGNDSKSTLYCSFCGKSQHEVRKLIAGPTVFICDECVELCMDIIREESKSSLVKSRDGVPTPKEIRRVLDDYVIGQDFAKKVLSVAVHNHYKRLAHATKHNDVELAKSNIMLIGPTGSGKTLLAQTLARILDVPFTMADATTLTEAGYVGEDVENIILKLLQASDYNVERAQRGIVYIDEIDKISRKSDNPSITRDVSGEGVQQALLKIMEGTVASVPPQGGRKHPQQEFLQVDTTNILFICGGAFAGLERIISQRGKGTSIGFGASVQAPDDRRTGEVFRSVEPEDLLKFGLIPEFVGRLPVLATLEDLDEEALKKILQEPKNALVKQYQRLFEMENVELTFQDEALGLVARKAIERKTGARGLRSILETILLDTMYDLPGLDSVEQVVIGPEVVDGKSKPLFIHGDRNKDAPASVSA</sequence>
<evidence type="ECO:0000255" key="1">
    <source>
        <dbReference type="HAMAP-Rule" id="MF_00175"/>
    </source>
</evidence>
<evidence type="ECO:0000255" key="2">
    <source>
        <dbReference type="PROSITE-ProRule" id="PRU01250"/>
    </source>
</evidence>
<organism>
    <name type="scientific">Methylorubrum populi (strain ATCC BAA-705 / NCIMB 13946 / BJ001)</name>
    <name type="common">Methylobacterium populi</name>
    <dbReference type="NCBI Taxonomy" id="441620"/>
    <lineage>
        <taxon>Bacteria</taxon>
        <taxon>Pseudomonadati</taxon>
        <taxon>Pseudomonadota</taxon>
        <taxon>Alphaproteobacteria</taxon>
        <taxon>Hyphomicrobiales</taxon>
        <taxon>Methylobacteriaceae</taxon>
        <taxon>Methylorubrum</taxon>
    </lineage>
</organism>
<dbReference type="EMBL" id="CP001029">
    <property type="protein sequence ID" value="ACB80534.1"/>
    <property type="molecule type" value="Genomic_DNA"/>
</dbReference>
<dbReference type="RefSeq" id="WP_012454266.1">
    <property type="nucleotide sequence ID" value="NC_010725.1"/>
</dbReference>
<dbReference type="SMR" id="B1Z9C8"/>
<dbReference type="STRING" id="441620.Mpop_2372"/>
<dbReference type="KEGG" id="mpo:Mpop_2372"/>
<dbReference type="eggNOG" id="COG1219">
    <property type="taxonomic scope" value="Bacteria"/>
</dbReference>
<dbReference type="HOGENOM" id="CLU_014218_8_2_5"/>
<dbReference type="OrthoDB" id="9804062at2"/>
<dbReference type="Proteomes" id="UP000007136">
    <property type="component" value="Chromosome"/>
</dbReference>
<dbReference type="GO" id="GO:0009376">
    <property type="term" value="C:HslUV protease complex"/>
    <property type="evidence" value="ECO:0007669"/>
    <property type="project" value="TreeGrafter"/>
</dbReference>
<dbReference type="GO" id="GO:0005524">
    <property type="term" value="F:ATP binding"/>
    <property type="evidence" value="ECO:0007669"/>
    <property type="project" value="UniProtKB-UniRule"/>
</dbReference>
<dbReference type="GO" id="GO:0016887">
    <property type="term" value="F:ATP hydrolysis activity"/>
    <property type="evidence" value="ECO:0007669"/>
    <property type="project" value="InterPro"/>
</dbReference>
<dbReference type="GO" id="GO:0140662">
    <property type="term" value="F:ATP-dependent protein folding chaperone"/>
    <property type="evidence" value="ECO:0007669"/>
    <property type="project" value="InterPro"/>
</dbReference>
<dbReference type="GO" id="GO:0046983">
    <property type="term" value="F:protein dimerization activity"/>
    <property type="evidence" value="ECO:0007669"/>
    <property type="project" value="InterPro"/>
</dbReference>
<dbReference type="GO" id="GO:0051082">
    <property type="term" value="F:unfolded protein binding"/>
    <property type="evidence" value="ECO:0007669"/>
    <property type="project" value="UniProtKB-UniRule"/>
</dbReference>
<dbReference type="GO" id="GO:0008270">
    <property type="term" value="F:zinc ion binding"/>
    <property type="evidence" value="ECO:0007669"/>
    <property type="project" value="InterPro"/>
</dbReference>
<dbReference type="GO" id="GO:0051301">
    <property type="term" value="P:cell division"/>
    <property type="evidence" value="ECO:0007669"/>
    <property type="project" value="TreeGrafter"/>
</dbReference>
<dbReference type="GO" id="GO:0051603">
    <property type="term" value="P:proteolysis involved in protein catabolic process"/>
    <property type="evidence" value="ECO:0007669"/>
    <property type="project" value="TreeGrafter"/>
</dbReference>
<dbReference type="CDD" id="cd19497">
    <property type="entry name" value="RecA-like_ClpX"/>
    <property type="match status" value="1"/>
</dbReference>
<dbReference type="FunFam" id="1.10.8.60:FF:000002">
    <property type="entry name" value="ATP-dependent Clp protease ATP-binding subunit ClpX"/>
    <property type="match status" value="1"/>
</dbReference>
<dbReference type="FunFam" id="3.40.50.300:FF:000005">
    <property type="entry name" value="ATP-dependent Clp protease ATP-binding subunit ClpX"/>
    <property type="match status" value="1"/>
</dbReference>
<dbReference type="Gene3D" id="1.10.8.60">
    <property type="match status" value="1"/>
</dbReference>
<dbReference type="Gene3D" id="6.20.220.10">
    <property type="entry name" value="ClpX chaperone, C4-type zinc finger domain"/>
    <property type="match status" value="1"/>
</dbReference>
<dbReference type="Gene3D" id="3.40.50.300">
    <property type="entry name" value="P-loop containing nucleotide triphosphate hydrolases"/>
    <property type="match status" value="1"/>
</dbReference>
<dbReference type="HAMAP" id="MF_00175">
    <property type="entry name" value="ClpX"/>
    <property type="match status" value="1"/>
</dbReference>
<dbReference type="InterPro" id="IPR003593">
    <property type="entry name" value="AAA+_ATPase"/>
</dbReference>
<dbReference type="InterPro" id="IPR050052">
    <property type="entry name" value="ATP-dep_Clp_protease_ClpX"/>
</dbReference>
<dbReference type="InterPro" id="IPR003959">
    <property type="entry name" value="ATPase_AAA_core"/>
</dbReference>
<dbReference type="InterPro" id="IPR019489">
    <property type="entry name" value="Clp_ATPase_C"/>
</dbReference>
<dbReference type="InterPro" id="IPR004487">
    <property type="entry name" value="Clp_protease_ATP-bd_su_ClpX"/>
</dbReference>
<dbReference type="InterPro" id="IPR046425">
    <property type="entry name" value="ClpX_bact"/>
</dbReference>
<dbReference type="InterPro" id="IPR027417">
    <property type="entry name" value="P-loop_NTPase"/>
</dbReference>
<dbReference type="InterPro" id="IPR010603">
    <property type="entry name" value="Znf_CppX_C4"/>
</dbReference>
<dbReference type="InterPro" id="IPR038366">
    <property type="entry name" value="Znf_CppX_C4_sf"/>
</dbReference>
<dbReference type="NCBIfam" id="TIGR00382">
    <property type="entry name" value="clpX"/>
    <property type="match status" value="1"/>
</dbReference>
<dbReference type="NCBIfam" id="NF003745">
    <property type="entry name" value="PRK05342.1"/>
    <property type="match status" value="1"/>
</dbReference>
<dbReference type="PANTHER" id="PTHR48102:SF7">
    <property type="entry name" value="ATP-DEPENDENT CLP PROTEASE ATP-BINDING SUBUNIT CLPX-LIKE, MITOCHONDRIAL"/>
    <property type="match status" value="1"/>
</dbReference>
<dbReference type="PANTHER" id="PTHR48102">
    <property type="entry name" value="ATP-DEPENDENT CLP PROTEASE ATP-BINDING SUBUNIT CLPX-LIKE, MITOCHONDRIAL-RELATED"/>
    <property type="match status" value="1"/>
</dbReference>
<dbReference type="Pfam" id="PF07724">
    <property type="entry name" value="AAA_2"/>
    <property type="match status" value="1"/>
</dbReference>
<dbReference type="Pfam" id="PF10431">
    <property type="entry name" value="ClpB_D2-small"/>
    <property type="match status" value="1"/>
</dbReference>
<dbReference type="Pfam" id="PF06689">
    <property type="entry name" value="zf-C4_ClpX"/>
    <property type="match status" value="1"/>
</dbReference>
<dbReference type="SMART" id="SM00382">
    <property type="entry name" value="AAA"/>
    <property type="match status" value="1"/>
</dbReference>
<dbReference type="SMART" id="SM01086">
    <property type="entry name" value="ClpB_D2-small"/>
    <property type="match status" value="1"/>
</dbReference>
<dbReference type="SMART" id="SM00994">
    <property type="entry name" value="zf-C4_ClpX"/>
    <property type="match status" value="1"/>
</dbReference>
<dbReference type="SUPFAM" id="SSF57716">
    <property type="entry name" value="Glucocorticoid receptor-like (DNA-binding domain)"/>
    <property type="match status" value="1"/>
</dbReference>
<dbReference type="SUPFAM" id="SSF52540">
    <property type="entry name" value="P-loop containing nucleoside triphosphate hydrolases"/>
    <property type="match status" value="1"/>
</dbReference>
<dbReference type="PROSITE" id="PS51902">
    <property type="entry name" value="CLPX_ZB"/>
    <property type="match status" value="1"/>
</dbReference>
<reference key="1">
    <citation type="submission" date="2008-04" db="EMBL/GenBank/DDBJ databases">
        <title>Complete sequence of chromosome of Methylobacterium populi BJ001.</title>
        <authorList>
            <consortium name="US DOE Joint Genome Institute"/>
            <person name="Copeland A."/>
            <person name="Lucas S."/>
            <person name="Lapidus A."/>
            <person name="Glavina del Rio T."/>
            <person name="Dalin E."/>
            <person name="Tice H."/>
            <person name="Bruce D."/>
            <person name="Goodwin L."/>
            <person name="Pitluck S."/>
            <person name="Chertkov O."/>
            <person name="Brettin T."/>
            <person name="Detter J.C."/>
            <person name="Han C."/>
            <person name="Kuske C.R."/>
            <person name="Schmutz J."/>
            <person name="Larimer F."/>
            <person name="Land M."/>
            <person name="Hauser L."/>
            <person name="Kyrpides N."/>
            <person name="Mikhailova N."/>
            <person name="Marx C."/>
            <person name="Richardson P."/>
        </authorList>
    </citation>
    <scope>NUCLEOTIDE SEQUENCE [LARGE SCALE GENOMIC DNA]</scope>
    <source>
        <strain>ATCC BAA-705 / NCIMB 13946 / BJ001</strain>
    </source>
</reference>
<gene>
    <name evidence="1" type="primary">clpX</name>
    <name type="ordered locus">Mpop_2372</name>
</gene>
<protein>
    <recommendedName>
        <fullName evidence="1">ATP-dependent Clp protease ATP-binding subunit ClpX</fullName>
    </recommendedName>
</protein>
<comment type="function">
    <text evidence="1">ATP-dependent specificity component of the Clp protease. It directs the protease to specific substrates. Can perform chaperone functions in the absence of ClpP.</text>
</comment>
<comment type="subunit">
    <text evidence="1">Component of the ClpX-ClpP complex. Forms a hexameric ring that, in the presence of ATP, binds to fourteen ClpP subunits assembled into a disk-like structure with a central cavity, resembling the structure of eukaryotic proteasomes.</text>
</comment>
<comment type="similarity">
    <text evidence="1">Belongs to the ClpX chaperone family.</text>
</comment>
<accession>B1Z9C8</accession>